<organism>
    <name type="scientific">Salmonella choleraesuis (strain SC-B67)</name>
    <dbReference type="NCBI Taxonomy" id="321314"/>
    <lineage>
        <taxon>Bacteria</taxon>
        <taxon>Pseudomonadati</taxon>
        <taxon>Pseudomonadota</taxon>
        <taxon>Gammaproteobacteria</taxon>
        <taxon>Enterobacterales</taxon>
        <taxon>Enterobacteriaceae</taxon>
        <taxon>Salmonella</taxon>
    </lineage>
</organism>
<name>ATPD_SALCH</name>
<comment type="function">
    <text evidence="1">F(1)F(0) ATP synthase produces ATP from ADP in the presence of a proton or sodium gradient. F-type ATPases consist of two structural domains, F(1) containing the extramembraneous catalytic core and F(0) containing the membrane proton channel, linked together by a central stalk and a peripheral stalk. During catalysis, ATP synthesis in the catalytic domain of F(1) is coupled via a rotary mechanism of the central stalk subunits to proton translocation.</text>
</comment>
<comment type="function">
    <text evidence="1">This protein is part of the stalk that links CF(0) to CF(1). It either transmits conformational changes from CF(0) to CF(1) or is implicated in proton conduction.</text>
</comment>
<comment type="subunit">
    <text evidence="1">F-type ATPases have 2 components, F(1) - the catalytic core - and F(0) - the membrane proton channel. F(1) has five subunits: alpha(3), beta(3), gamma(1), delta(1), epsilon(1). F(0) has three main subunits: a(1), b(2) and c(10-14). The alpha and beta chains form an alternating ring which encloses part of the gamma chain. F(1) is attached to F(0) by a central stalk formed by the gamma and epsilon chains, while a peripheral stalk is formed by the delta and b chains.</text>
</comment>
<comment type="subcellular location">
    <subcellularLocation>
        <location evidence="1">Cell inner membrane</location>
        <topology evidence="1">Peripheral membrane protein</topology>
    </subcellularLocation>
</comment>
<comment type="similarity">
    <text evidence="1">Belongs to the ATPase delta chain family.</text>
</comment>
<protein>
    <recommendedName>
        <fullName evidence="1">ATP synthase subunit delta</fullName>
    </recommendedName>
    <alternativeName>
        <fullName evidence="1">ATP synthase F(1) sector subunit delta</fullName>
    </alternativeName>
    <alternativeName>
        <fullName evidence="1">F-type ATPase subunit delta</fullName>
        <shortName evidence="1">F-ATPase subunit delta</shortName>
    </alternativeName>
</protein>
<proteinExistence type="inferred from homology"/>
<sequence length="177" mass="19412">MSEFVTVARPYAKAAFDFAVEHQSVERWQDMLAFAAEVTKNEQMAELLSGALAPETLAESFIAVCGEQLDENGQNLIRVMAENNRLNALPDVLEQFIHLRAASEATSEVEVTSATALSEEQLSKISAAMEKRLSRKVKLNCKIDKSVMAGVIIRAGDMVIDGSVRGRLERLADVLQS</sequence>
<reference key="1">
    <citation type="journal article" date="2005" name="Nucleic Acids Res.">
        <title>The genome sequence of Salmonella enterica serovar Choleraesuis, a highly invasive and resistant zoonotic pathogen.</title>
        <authorList>
            <person name="Chiu C.-H."/>
            <person name="Tang P."/>
            <person name="Chu C."/>
            <person name="Hu S."/>
            <person name="Bao Q."/>
            <person name="Yu J."/>
            <person name="Chou Y.-Y."/>
            <person name="Wang H.-S."/>
            <person name="Lee Y.-S."/>
        </authorList>
    </citation>
    <scope>NUCLEOTIDE SEQUENCE [LARGE SCALE GENOMIC DNA]</scope>
    <source>
        <strain>SC-B67</strain>
    </source>
</reference>
<gene>
    <name evidence="1" type="primary">atpH</name>
    <name type="ordered locus">SCH_3780</name>
</gene>
<accession>Q57HX6</accession>
<dbReference type="EMBL" id="AE017220">
    <property type="protein sequence ID" value="AAX67686.1"/>
    <property type="molecule type" value="Genomic_DNA"/>
</dbReference>
<dbReference type="RefSeq" id="WP_001288957.1">
    <property type="nucleotide sequence ID" value="NC_006905.1"/>
</dbReference>
<dbReference type="SMR" id="Q57HX6"/>
<dbReference type="KEGG" id="sec:SCH_3780"/>
<dbReference type="HOGENOM" id="CLU_085114_3_0_6"/>
<dbReference type="Proteomes" id="UP000000538">
    <property type="component" value="Chromosome"/>
</dbReference>
<dbReference type="GO" id="GO:0005886">
    <property type="term" value="C:plasma membrane"/>
    <property type="evidence" value="ECO:0007669"/>
    <property type="project" value="UniProtKB-SubCell"/>
</dbReference>
<dbReference type="GO" id="GO:0045259">
    <property type="term" value="C:proton-transporting ATP synthase complex"/>
    <property type="evidence" value="ECO:0007669"/>
    <property type="project" value="UniProtKB-KW"/>
</dbReference>
<dbReference type="GO" id="GO:0046933">
    <property type="term" value="F:proton-transporting ATP synthase activity, rotational mechanism"/>
    <property type="evidence" value="ECO:0007669"/>
    <property type="project" value="UniProtKB-UniRule"/>
</dbReference>
<dbReference type="FunFam" id="1.10.520.20:FF:000001">
    <property type="entry name" value="ATP synthase subunit delta"/>
    <property type="match status" value="1"/>
</dbReference>
<dbReference type="Gene3D" id="1.10.520.20">
    <property type="entry name" value="N-terminal domain of the delta subunit of the F1F0-ATP synthase"/>
    <property type="match status" value="1"/>
</dbReference>
<dbReference type="HAMAP" id="MF_01416">
    <property type="entry name" value="ATP_synth_delta_bact"/>
    <property type="match status" value="1"/>
</dbReference>
<dbReference type="InterPro" id="IPR026015">
    <property type="entry name" value="ATP_synth_OSCP/delta_N_sf"/>
</dbReference>
<dbReference type="InterPro" id="IPR020781">
    <property type="entry name" value="ATPase_OSCP/d_CS"/>
</dbReference>
<dbReference type="InterPro" id="IPR000711">
    <property type="entry name" value="ATPase_OSCP/dsu"/>
</dbReference>
<dbReference type="NCBIfam" id="TIGR01145">
    <property type="entry name" value="ATP_synt_delta"/>
    <property type="match status" value="1"/>
</dbReference>
<dbReference type="NCBIfam" id="NF004402">
    <property type="entry name" value="PRK05758.2-2"/>
    <property type="match status" value="1"/>
</dbReference>
<dbReference type="NCBIfam" id="NF004404">
    <property type="entry name" value="PRK05758.2-5"/>
    <property type="match status" value="1"/>
</dbReference>
<dbReference type="PANTHER" id="PTHR11910">
    <property type="entry name" value="ATP SYNTHASE DELTA CHAIN"/>
    <property type="match status" value="1"/>
</dbReference>
<dbReference type="Pfam" id="PF00213">
    <property type="entry name" value="OSCP"/>
    <property type="match status" value="1"/>
</dbReference>
<dbReference type="PRINTS" id="PR00125">
    <property type="entry name" value="ATPASEDELTA"/>
</dbReference>
<dbReference type="SUPFAM" id="SSF47928">
    <property type="entry name" value="N-terminal domain of the delta subunit of the F1F0-ATP synthase"/>
    <property type="match status" value="1"/>
</dbReference>
<dbReference type="PROSITE" id="PS00389">
    <property type="entry name" value="ATPASE_DELTA"/>
    <property type="match status" value="1"/>
</dbReference>
<keyword id="KW-0066">ATP synthesis</keyword>
<keyword id="KW-0997">Cell inner membrane</keyword>
<keyword id="KW-1003">Cell membrane</keyword>
<keyword id="KW-0139">CF(1)</keyword>
<keyword id="KW-0375">Hydrogen ion transport</keyword>
<keyword id="KW-0406">Ion transport</keyword>
<keyword id="KW-0472">Membrane</keyword>
<keyword id="KW-0813">Transport</keyword>
<feature type="chain" id="PRO_0000371113" description="ATP synthase subunit delta">
    <location>
        <begin position="1"/>
        <end position="177"/>
    </location>
</feature>
<evidence type="ECO:0000255" key="1">
    <source>
        <dbReference type="HAMAP-Rule" id="MF_01416"/>
    </source>
</evidence>